<dbReference type="EC" id="3.1.1.96" evidence="1"/>
<dbReference type="EMBL" id="AE017282">
    <property type="protein sequence ID" value="AAU91973.1"/>
    <property type="molecule type" value="Genomic_DNA"/>
</dbReference>
<dbReference type="RefSeq" id="WP_010960997.1">
    <property type="nucleotide sequence ID" value="NC_002977.6"/>
</dbReference>
<dbReference type="SMR" id="Q607L6"/>
<dbReference type="STRING" id="243233.MCA1743"/>
<dbReference type="GeneID" id="88223996"/>
<dbReference type="KEGG" id="mca:MCA1743"/>
<dbReference type="eggNOG" id="COG1490">
    <property type="taxonomic scope" value="Bacteria"/>
</dbReference>
<dbReference type="HOGENOM" id="CLU_076901_1_1_6"/>
<dbReference type="Proteomes" id="UP000006821">
    <property type="component" value="Chromosome"/>
</dbReference>
<dbReference type="GO" id="GO:0005737">
    <property type="term" value="C:cytoplasm"/>
    <property type="evidence" value="ECO:0007669"/>
    <property type="project" value="UniProtKB-SubCell"/>
</dbReference>
<dbReference type="GO" id="GO:0051500">
    <property type="term" value="F:D-tyrosyl-tRNA(Tyr) deacylase activity"/>
    <property type="evidence" value="ECO:0007669"/>
    <property type="project" value="TreeGrafter"/>
</dbReference>
<dbReference type="GO" id="GO:0106026">
    <property type="term" value="F:Gly-tRNA(Ala) deacylase activity"/>
    <property type="evidence" value="ECO:0007669"/>
    <property type="project" value="UniProtKB-UniRule"/>
</dbReference>
<dbReference type="GO" id="GO:0043908">
    <property type="term" value="F:Ser(Gly)-tRNA(Ala) hydrolase activity"/>
    <property type="evidence" value="ECO:0007669"/>
    <property type="project" value="UniProtKB-UniRule"/>
</dbReference>
<dbReference type="GO" id="GO:0000049">
    <property type="term" value="F:tRNA binding"/>
    <property type="evidence" value="ECO:0007669"/>
    <property type="project" value="UniProtKB-UniRule"/>
</dbReference>
<dbReference type="GO" id="GO:0019478">
    <property type="term" value="P:D-amino acid catabolic process"/>
    <property type="evidence" value="ECO:0007669"/>
    <property type="project" value="UniProtKB-UniRule"/>
</dbReference>
<dbReference type="FunFam" id="3.50.80.10:FF:000001">
    <property type="entry name" value="D-aminoacyl-tRNA deacylase"/>
    <property type="match status" value="1"/>
</dbReference>
<dbReference type="Gene3D" id="3.50.80.10">
    <property type="entry name" value="D-tyrosyl-tRNA(Tyr) deacylase"/>
    <property type="match status" value="1"/>
</dbReference>
<dbReference type="HAMAP" id="MF_00518">
    <property type="entry name" value="Deacylase_Dtd"/>
    <property type="match status" value="1"/>
</dbReference>
<dbReference type="InterPro" id="IPR003732">
    <property type="entry name" value="Daa-tRNA_deacyls_DTD"/>
</dbReference>
<dbReference type="InterPro" id="IPR023509">
    <property type="entry name" value="DTD-like_sf"/>
</dbReference>
<dbReference type="NCBIfam" id="TIGR00256">
    <property type="entry name" value="D-aminoacyl-tRNA deacylase"/>
    <property type="match status" value="1"/>
</dbReference>
<dbReference type="PANTHER" id="PTHR10472:SF5">
    <property type="entry name" value="D-AMINOACYL-TRNA DEACYLASE 1"/>
    <property type="match status" value="1"/>
</dbReference>
<dbReference type="PANTHER" id="PTHR10472">
    <property type="entry name" value="D-TYROSYL-TRNA TYR DEACYLASE"/>
    <property type="match status" value="1"/>
</dbReference>
<dbReference type="Pfam" id="PF02580">
    <property type="entry name" value="Tyr_Deacylase"/>
    <property type="match status" value="1"/>
</dbReference>
<dbReference type="SUPFAM" id="SSF69500">
    <property type="entry name" value="DTD-like"/>
    <property type="match status" value="1"/>
</dbReference>
<protein>
    <recommendedName>
        <fullName evidence="1">D-aminoacyl-tRNA deacylase</fullName>
        <shortName evidence="1">DTD</shortName>
        <ecNumber evidence="1">3.1.1.96</ecNumber>
    </recommendedName>
    <alternativeName>
        <fullName evidence="1">Gly-tRNA(Ala) deacylase</fullName>
    </alternativeName>
</protein>
<name>DTD_METCA</name>
<reference key="1">
    <citation type="journal article" date="2004" name="PLoS Biol.">
        <title>Genomic insights into methanotrophy: the complete genome sequence of Methylococcus capsulatus (Bath).</title>
        <authorList>
            <person name="Ward N.L."/>
            <person name="Larsen O."/>
            <person name="Sakwa J."/>
            <person name="Bruseth L."/>
            <person name="Khouri H.M."/>
            <person name="Durkin A.S."/>
            <person name="Dimitrov G."/>
            <person name="Jiang L."/>
            <person name="Scanlan D."/>
            <person name="Kang K.H."/>
            <person name="Lewis M.R."/>
            <person name="Nelson K.E."/>
            <person name="Methe B.A."/>
            <person name="Wu M."/>
            <person name="Heidelberg J.F."/>
            <person name="Paulsen I.T."/>
            <person name="Fouts D.E."/>
            <person name="Ravel J."/>
            <person name="Tettelin H."/>
            <person name="Ren Q."/>
            <person name="Read T.D."/>
            <person name="DeBoy R.T."/>
            <person name="Seshadri R."/>
            <person name="Salzberg S.L."/>
            <person name="Jensen H.B."/>
            <person name="Birkeland N.K."/>
            <person name="Nelson W.C."/>
            <person name="Dodson R.J."/>
            <person name="Grindhaug S.H."/>
            <person name="Holt I.E."/>
            <person name="Eidhammer I."/>
            <person name="Jonasen I."/>
            <person name="Vanaken S."/>
            <person name="Utterback T.R."/>
            <person name="Feldblyum T.V."/>
            <person name="Fraser C.M."/>
            <person name="Lillehaug J.R."/>
            <person name="Eisen J.A."/>
        </authorList>
    </citation>
    <scope>NUCLEOTIDE SEQUENCE [LARGE SCALE GENOMIC DNA]</scope>
    <source>
        <strain>ATCC 33009 / NCIMB 11132 / Bath</strain>
    </source>
</reference>
<feature type="chain" id="PRO_0000164559" description="D-aminoacyl-tRNA deacylase">
    <location>
        <begin position="1"/>
        <end position="153"/>
    </location>
</feature>
<feature type="short sequence motif" description="Gly-cisPro motif, important for rejection of L-amino acids" evidence="1">
    <location>
        <begin position="137"/>
        <end position="138"/>
    </location>
</feature>
<gene>
    <name evidence="1" type="primary">dtd</name>
    <name type="ordered locus">MCA1743</name>
</gene>
<organism>
    <name type="scientific">Methylococcus capsulatus (strain ATCC 33009 / NCIMB 11132 / Bath)</name>
    <dbReference type="NCBI Taxonomy" id="243233"/>
    <lineage>
        <taxon>Bacteria</taxon>
        <taxon>Pseudomonadati</taxon>
        <taxon>Pseudomonadota</taxon>
        <taxon>Gammaproteobacteria</taxon>
        <taxon>Methylococcales</taxon>
        <taxon>Methylococcaceae</taxon>
        <taxon>Methylococcus</taxon>
    </lineage>
</organism>
<evidence type="ECO:0000255" key="1">
    <source>
        <dbReference type="HAMAP-Rule" id="MF_00518"/>
    </source>
</evidence>
<accession>Q607L6</accession>
<keyword id="KW-0963">Cytoplasm</keyword>
<keyword id="KW-0378">Hydrolase</keyword>
<keyword id="KW-1185">Reference proteome</keyword>
<keyword id="KW-0694">RNA-binding</keyword>
<keyword id="KW-0820">tRNA-binding</keyword>
<comment type="function">
    <text evidence="1">An aminoacyl-tRNA editing enzyme that deacylates mischarged D-aminoacyl-tRNAs. Also deacylates mischarged glycyl-tRNA(Ala), protecting cells against glycine mischarging by AlaRS. Acts via tRNA-based rather than protein-based catalysis; rejects L-amino acids rather than detecting D-amino acids in the active site. By recycling D-aminoacyl-tRNA to D-amino acids and free tRNA molecules, this enzyme counteracts the toxicity associated with the formation of D-aminoacyl-tRNA entities in vivo and helps enforce protein L-homochirality.</text>
</comment>
<comment type="catalytic activity">
    <reaction evidence="1">
        <text>glycyl-tRNA(Ala) + H2O = tRNA(Ala) + glycine + H(+)</text>
        <dbReference type="Rhea" id="RHEA:53744"/>
        <dbReference type="Rhea" id="RHEA-COMP:9657"/>
        <dbReference type="Rhea" id="RHEA-COMP:13640"/>
        <dbReference type="ChEBI" id="CHEBI:15377"/>
        <dbReference type="ChEBI" id="CHEBI:15378"/>
        <dbReference type="ChEBI" id="CHEBI:57305"/>
        <dbReference type="ChEBI" id="CHEBI:78442"/>
        <dbReference type="ChEBI" id="CHEBI:78522"/>
        <dbReference type="EC" id="3.1.1.96"/>
    </reaction>
</comment>
<comment type="catalytic activity">
    <reaction evidence="1">
        <text>a D-aminoacyl-tRNA + H2O = a tRNA + a D-alpha-amino acid + H(+)</text>
        <dbReference type="Rhea" id="RHEA:13953"/>
        <dbReference type="Rhea" id="RHEA-COMP:10123"/>
        <dbReference type="Rhea" id="RHEA-COMP:10124"/>
        <dbReference type="ChEBI" id="CHEBI:15377"/>
        <dbReference type="ChEBI" id="CHEBI:15378"/>
        <dbReference type="ChEBI" id="CHEBI:59871"/>
        <dbReference type="ChEBI" id="CHEBI:78442"/>
        <dbReference type="ChEBI" id="CHEBI:79333"/>
        <dbReference type="EC" id="3.1.1.96"/>
    </reaction>
</comment>
<comment type="subunit">
    <text evidence="1">Homodimer.</text>
</comment>
<comment type="subcellular location">
    <subcellularLocation>
        <location evidence="1">Cytoplasm</location>
    </subcellularLocation>
</comment>
<comment type="domain">
    <text evidence="1">A Gly-cisPro motif from one monomer fits into the active site of the other monomer to allow specific chiral rejection of L-amino acids.</text>
</comment>
<comment type="similarity">
    <text evidence="1">Belongs to the DTD family.</text>
</comment>
<sequence length="153" mass="16270">MIALIQRVTQASVRVDGATVGAIGRGTLALVAIERGDGATQVSRMAERLLGYRMFPDSENRMNLSLAETGGGLLLVSQFTLAADTAKGMRPSFTPAADPETGRRLFDALVDATQRRHSPVATGRFGADMQVFLVNDGPVTFLLRCPPDRPPGG</sequence>
<proteinExistence type="inferred from homology"/>